<comment type="function">
    <text evidence="1">Produces ATP from ADP in the presence of a proton gradient across the membrane.</text>
</comment>
<comment type="subunit">
    <text evidence="1">F-type ATPases have 2 components, CF(1) - the catalytic core - and CF(0) - the membrane proton channel. CF(1) has five subunits: alpha(3), beta(3), gamma(1), delta(1), epsilon(1). CF(0) has three main subunits: a, b and c.</text>
</comment>
<comment type="subcellular location">
    <subcellularLocation>
        <location evidence="1">Plastid</location>
        <location evidence="1">Chloroplast thylakoid membrane</location>
        <topology evidence="1">Peripheral membrane protein</topology>
    </subcellularLocation>
</comment>
<comment type="similarity">
    <text evidence="1">Belongs to the ATPase epsilon chain family.</text>
</comment>
<proteinExistence type="inferred from homology"/>
<reference key="1">
    <citation type="journal article" date="2008" name="BMC Evol. Biol.">
        <title>The complete plastid genome sequence of Welwitschia mirabilis: an unusually compact plastome with accelerated divergence rates.</title>
        <authorList>
            <person name="McCoy S.R."/>
            <person name="Kuehl J.V."/>
            <person name="Boore J.L."/>
            <person name="Raubeson L.A."/>
        </authorList>
    </citation>
    <scope>NUCLEOTIDE SEQUENCE [LARGE SCALE GENOMIC DNA]</scope>
</reference>
<reference key="2">
    <citation type="journal article" date="2009" name="Mol. Phylogenet. Evol.">
        <title>Evolution of reduced and compact chloroplast genomes (cpDNAs) in gnetophytes: Selection toward a lower-cost strategy.</title>
        <authorList>
            <person name="Wu C.-S."/>
            <person name="Lai Y.-T."/>
            <person name="Lin C.-P."/>
            <person name="Wang Y.-N."/>
            <person name="Chaw S.-M."/>
        </authorList>
    </citation>
    <scope>NUCLEOTIDE SEQUENCE [LARGE SCALE GENOMIC DNA]</scope>
</reference>
<evidence type="ECO:0000255" key="1">
    <source>
        <dbReference type="HAMAP-Rule" id="MF_00530"/>
    </source>
</evidence>
<sequence>MNLNLRVLTPNRVVWDSPVNEIILSTNSGKIGILPNHASLVTAVDIAVMQIRINSQWSTIVLMGGFAKIDNNELLLLVYDAEKGVDIDPQEAQETFNKAKTNLNKAEGKRQKIEADLAVKKARTRLEAINVLTPTSISN</sequence>
<gene>
    <name evidence="1" type="primary">atpE</name>
</gene>
<name>ATPE_WELMI</name>
<protein>
    <recommendedName>
        <fullName evidence="1">ATP synthase epsilon chain, chloroplastic</fullName>
    </recommendedName>
    <alternativeName>
        <fullName evidence="1">ATP synthase F1 sector epsilon subunit</fullName>
    </alternativeName>
    <alternativeName>
        <fullName evidence="1">F-ATPase epsilon subunit</fullName>
    </alternativeName>
</protein>
<accession>B2Y1W6</accession>
<feature type="chain" id="PRO_1000146303" description="ATP synthase epsilon chain, chloroplastic">
    <location>
        <begin position="1"/>
        <end position="139"/>
    </location>
</feature>
<dbReference type="EMBL" id="EU342371">
    <property type="protein sequence ID" value="ABY26796.1"/>
    <property type="molecule type" value="Genomic_DNA"/>
</dbReference>
<dbReference type="EMBL" id="AP009568">
    <property type="protein sequence ID" value="BAH11222.1"/>
    <property type="molecule type" value="Genomic_DNA"/>
</dbReference>
<dbReference type="RefSeq" id="YP_001876583.1">
    <property type="nucleotide sequence ID" value="NC_010654.1"/>
</dbReference>
<dbReference type="SMR" id="B2Y1W6"/>
<dbReference type="GeneID" id="6276244"/>
<dbReference type="OMA" id="MTVHCDI"/>
<dbReference type="GO" id="GO:0009535">
    <property type="term" value="C:chloroplast thylakoid membrane"/>
    <property type="evidence" value="ECO:0007669"/>
    <property type="project" value="UniProtKB-SubCell"/>
</dbReference>
<dbReference type="GO" id="GO:0045259">
    <property type="term" value="C:proton-transporting ATP synthase complex"/>
    <property type="evidence" value="ECO:0007669"/>
    <property type="project" value="UniProtKB-KW"/>
</dbReference>
<dbReference type="GO" id="GO:0005524">
    <property type="term" value="F:ATP binding"/>
    <property type="evidence" value="ECO:0007669"/>
    <property type="project" value="UniProtKB-UniRule"/>
</dbReference>
<dbReference type="GO" id="GO:0046933">
    <property type="term" value="F:proton-transporting ATP synthase activity, rotational mechanism"/>
    <property type="evidence" value="ECO:0007669"/>
    <property type="project" value="UniProtKB-UniRule"/>
</dbReference>
<dbReference type="CDD" id="cd12152">
    <property type="entry name" value="F1-ATPase_delta"/>
    <property type="match status" value="1"/>
</dbReference>
<dbReference type="FunFam" id="2.60.15.10:FF:000002">
    <property type="entry name" value="ATP synthase epsilon chain, chloroplastic"/>
    <property type="match status" value="1"/>
</dbReference>
<dbReference type="Gene3D" id="6.10.140.480">
    <property type="match status" value="1"/>
</dbReference>
<dbReference type="Gene3D" id="2.60.15.10">
    <property type="entry name" value="F0F1 ATP synthase delta/epsilon subunit, N-terminal"/>
    <property type="match status" value="1"/>
</dbReference>
<dbReference type="HAMAP" id="MF_00530">
    <property type="entry name" value="ATP_synth_epsil_bac"/>
    <property type="match status" value="1"/>
</dbReference>
<dbReference type="InterPro" id="IPR001469">
    <property type="entry name" value="ATP_synth_F1_dsu/esu"/>
</dbReference>
<dbReference type="InterPro" id="IPR020546">
    <property type="entry name" value="ATP_synth_F1_dsu/esu_N"/>
</dbReference>
<dbReference type="InterPro" id="IPR020547">
    <property type="entry name" value="ATP_synth_F1_esu_C"/>
</dbReference>
<dbReference type="InterPro" id="IPR036771">
    <property type="entry name" value="ATPsynth_dsu/esu_N"/>
</dbReference>
<dbReference type="NCBIfam" id="TIGR01216">
    <property type="entry name" value="ATP_synt_epsi"/>
    <property type="match status" value="1"/>
</dbReference>
<dbReference type="PANTHER" id="PTHR13822">
    <property type="entry name" value="ATP SYNTHASE DELTA/EPSILON CHAIN"/>
    <property type="match status" value="1"/>
</dbReference>
<dbReference type="PANTHER" id="PTHR13822:SF10">
    <property type="entry name" value="ATP SYNTHASE EPSILON CHAIN, CHLOROPLASTIC"/>
    <property type="match status" value="1"/>
</dbReference>
<dbReference type="Pfam" id="PF00401">
    <property type="entry name" value="ATP-synt_DE"/>
    <property type="match status" value="1"/>
</dbReference>
<dbReference type="Pfam" id="PF02823">
    <property type="entry name" value="ATP-synt_DE_N"/>
    <property type="match status" value="1"/>
</dbReference>
<dbReference type="SUPFAM" id="SSF51344">
    <property type="entry name" value="Epsilon subunit of F1F0-ATP synthase N-terminal domain"/>
    <property type="match status" value="1"/>
</dbReference>
<geneLocation type="chloroplast"/>
<organism>
    <name type="scientific">Welwitschia mirabilis</name>
    <name type="common">Tree tumbo</name>
    <name type="synonym">Welwitschia bainesii</name>
    <dbReference type="NCBI Taxonomy" id="3377"/>
    <lineage>
        <taxon>Eukaryota</taxon>
        <taxon>Viridiplantae</taxon>
        <taxon>Streptophyta</taxon>
        <taxon>Embryophyta</taxon>
        <taxon>Tracheophyta</taxon>
        <taxon>Spermatophyta</taxon>
        <taxon>Gnetopsida</taxon>
        <taxon>Gnetidae</taxon>
        <taxon>Welwitschiales</taxon>
        <taxon>Welwitschiaceae</taxon>
        <taxon>Welwitschia</taxon>
    </lineage>
</organism>
<keyword id="KW-0066">ATP synthesis</keyword>
<keyword id="KW-0139">CF(1)</keyword>
<keyword id="KW-0150">Chloroplast</keyword>
<keyword id="KW-0375">Hydrogen ion transport</keyword>
<keyword id="KW-0406">Ion transport</keyword>
<keyword id="KW-0472">Membrane</keyword>
<keyword id="KW-0934">Plastid</keyword>
<keyword id="KW-0793">Thylakoid</keyword>
<keyword id="KW-0813">Transport</keyword>